<sequence length="155" mass="17315">MSRRGTAEEKTAKSDPIYRNRLVNMLVNRILKHGKKSLAYQIIYRAVKKIQQKTETNPLSVLRQAIRGVTPDIAVKARRVGGSTHQVPIEIGSTQGKALAIRWLLGASRKRPGRNMAFKLSSELVDAAKGSGDAIRKKEETHKMAEANRAFAHFR</sequence>
<feature type="chain" id="PRO_0000124434" description="Small ribosomal subunit protein uS7c">
    <location>
        <begin position="1"/>
        <end position="155"/>
    </location>
</feature>
<dbReference type="EMBL" id="AY147450">
    <property type="protein sequence ID" value="AAN31961.1"/>
    <property type="molecule type" value="Genomic_DNA"/>
</dbReference>
<dbReference type="RefSeq" id="YP_009972101.1">
    <property type="nucleotide sequence ID" value="NC_051949.1"/>
</dbReference>
<dbReference type="RefSeq" id="YP_009972114.1">
    <property type="nucleotide sequence ID" value="NC_051949.1"/>
</dbReference>
<dbReference type="SMR" id="Q67IP2"/>
<dbReference type="GeneID" id="60456631"/>
<dbReference type="GeneID" id="60456662"/>
<dbReference type="GO" id="GO:0009507">
    <property type="term" value="C:chloroplast"/>
    <property type="evidence" value="ECO:0007669"/>
    <property type="project" value="UniProtKB-SubCell"/>
</dbReference>
<dbReference type="GO" id="GO:0015935">
    <property type="term" value="C:small ribosomal subunit"/>
    <property type="evidence" value="ECO:0007669"/>
    <property type="project" value="InterPro"/>
</dbReference>
<dbReference type="GO" id="GO:0019843">
    <property type="term" value="F:rRNA binding"/>
    <property type="evidence" value="ECO:0007669"/>
    <property type="project" value="UniProtKB-UniRule"/>
</dbReference>
<dbReference type="GO" id="GO:0003735">
    <property type="term" value="F:structural constituent of ribosome"/>
    <property type="evidence" value="ECO:0007669"/>
    <property type="project" value="InterPro"/>
</dbReference>
<dbReference type="GO" id="GO:0006412">
    <property type="term" value="P:translation"/>
    <property type="evidence" value="ECO:0007669"/>
    <property type="project" value="UniProtKB-UniRule"/>
</dbReference>
<dbReference type="CDD" id="cd14871">
    <property type="entry name" value="uS7_Chloroplast"/>
    <property type="match status" value="1"/>
</dbReference>
<dbReference type="FunFam" id="1.10.455.10:FF:000001">
    <property type="entry name" value="30S ribosomal protein S7"/>
    <property type="match status" value="1"/>
</dbReference>
<dbReference type="Gene3D" id="1.10.455.10">
    <property type="entry name" value="Ribosomal protein S7 domain"/>
    <property type="match status" value="1"/>
</dbReference>
<dbReference type="HAMAP" id="MF_00480_B">
    <property type="entry name" value="Ribosomal_uS7_B"/>
    <property type="match status" value="1"/>
</dbReference>
<dbReference type="InterPro" id="IPR000235">
    <property type="entry name" value="Ribosomal_uS7"/>
</dbReference>
<dbReference type="InterPro" id="IPR005717">
    <property type="entry name" value="Ribosomal_uS7_bac/org-type"/>
</dbReference>
<dbReference type="InterPro" id="IPR020606">
    <property type="entry name" value="Ribosomal_uS7_CS"/>
</dbReference>
<dbReference type="InterPro" id="IPR023798">
    <property type="entry name" value="Ribosomal_uS7_dom"/>
</dbReference>
<dbReference type="InterPro" id="IPR036823">
    <property type="entry name" value="Ribosomal_uS7_dom_sf"/>
</dbReference>
<dbReference type="NCBIfam" id="TIGR01029">
    <property type="entry name" value="rpsG_bact"/>
    <property type="match status" value="1"/>
</dbReference>
<dbReference type="PANTHER" id="PTHR11205">
    <property type="entry name" value="RIBOSOMAL PROTEIN S7"/>
    <property type="match status" value="1"/>
</dbReference>
<dbReference type="Pfam" id="PF00177">
    <property type="entry name" value="Ribosomal_S7"/>
    <property type="match status" value="1"/>
</dbReference>
<dbReference type="PIRSF" id="PIRSF002122">
    <property type="entry name" value="RPS7p_RPS7a_RPS5e_RPS7o"/>
    <property type="match status" value="1"/>
</dbReference>
<dbReference type="SUPFAM" id="SSF47973">
    <property type="entry name" value="Ribosomal protein S7"/>
    <property type="match status" value="1"/>
</dbReference>
<dbReference type="PROSITE" id="PS00052">
    <property type="entry name" value="RIBOSOMAL_S7"/>
    <property type="match status" value="1"/>
</dbReference>
<evidence type="ECO:0000250" key="1"/>
<evidence type="ECO:0000305" key="2"/>
<name>RR7_BUTUM</name>
<keyword id="KW-0150">Chloroplast</keyword>
<keyword id="KW-0934">Plastid</keyword>
<keyword id="KW-0687">Ribonucleoprotein</keyword>
<keyword id="KW-0689">Ribosomal protein</keyword>
<keyword id="KW-0694">RNA-binding</keyword>
<keyword id="KW-0699">rRNA-binding</keyword>
<proteinExistence type="inferred from homology"/>
<comment type="function">
    <text evidence="1">One of the primary rRNA binding proteins, it binds directly to 16S rRNA where it nucleates assembly of the head domain of the 30S subunit.</text>
</comment>
<comment type="subunit">
    <text>Part of the 30S ribosomal subunit.</text>
</comment>
<comment type="subcellular location">
    <subcellularLocation>
        <location>Plastid</location>
        <location>Chloroplast</location>
    </subcellularLocation>
</comment>
<comment type="similarity">
    <text evidence="2">Belongs to the universal ribosomal protein uS7 family.</text>
</comment>
<reference key="1">
    <citation type="submission" date="2002-09" db="EMBL/GenBank/DDBJ databases">
        <title>Phylogenetic relationships among the major lineages of Asparagales based on a large chloroplast data set.</title>
        <authorList>
            <person name="McPherson M.A."/>
            <person name="Rai H.S."/>
            <person name="Wong W.A."/>
            <person name="Graham S.W."/>
        </authorList>
    </citation>
    <scope>NUCLEOTIDE SEQUENCE [GENOMIC DNA]</scope>
</reference>
<accession>Q67IP2</accession>
<geneLocation type="chloroplast"/>
<gene>
    <name type="primary">rps7</name>
</gene>
<protein>
    <recommendedName>
        <fullName evidence="2">Small ribosomal subunit protein uS7c</fullName>
    </recommendedName>
    <alternativeName>
        <fullName>30S ribosomal protein S7, chloroplastic</fullName>
    </alternativeName>
</protein>
<organism>
    <name type="scientific">Butomus umbellatus</name>
    <name type="common">Flowering rush</name>
    <dbReference type="NCBI Taxonomy" id="50236"/>
    <lineage>
        <taxon>Eukaryota</taxon>
        <taxon>Viridiplantae</taxon>
        <taxon>Streptophyta</taxon>
        <taxon>Embryophyta</taxon>
        <taxon>Tracheophyta</taxon>
        <taxon>Spermatophyta</taxon>
        <taxon>Magnoliopsida</taxon>
        <taxon>Liliopsida</taxon>
        <taxon>Butomaceae</taxon>
        <taxon>Butomus</taxon>
    </lineage>
</organism>